<proteinExistence type="inferred from homology"/>
<name>AFAM_RAT</name>
<organism>
    <name type="scientific">Rattus norvegicus</name>
    <name type="common">Rat</name>
    <dbReference type="NCBI Taxonomy" id="10116"/>
    <lineage>
        <taxon>Eukaryota</taxon>
        <taxon>Metazoa</taxon>
        <taxon>Chordata</taxon>
        <taxon>Craniata</taxon>
        <taxon>Vertebrata</taxon>
        <taxon>Euteleostomi</taxon>
        <taxon>Mammalia</taxon>
        <taxon>Eutheria</taxon>
        <taxon>Euarchontoglires</taxon>
        <taxon>Glires</taxon>
        <taxon>Rodentia</taxon>
        <taxon>Myomorpha</taxon>
        <taxon>Muroidea</taxon>
        <taxon>Muridae</taxon>
        <taxon>Murinae</taxon>
        <taxon>Rattus</taxon>
    </lineage>
</organism>
<feature type="signal peptide" evidence="1">
    <location>
        <begin position="1"/>
        <end position="21"/>
    </location>
</feature>
<feature type="chain" id="PRO_0000001108" description="Afamin">
    <location>
        <begin position="22"/>
        <end position="608"/>
    </location>
</feature>
<feature type="domain" description="Albumin 1" evidence="3">
    <location>
        <begin position="22"/>
        <end position="210"/>
    </location>
</feature>
<feature type="domain" description="Albumin 2" evidence="3">
    <location>
        <begin position="211"/>
        <end position="403"/>
    </location>
</feature>
<feature type="domain" description="Albumin 3" evidence="3">
    <location>
        <begin position="404"/>
        <end position="599"/>
    </location>
</feature>
<feature type="region of interest" description="Binding pocket for hydrophobic ligands" evidence="1">
    <location>
        <begin position="215"/>
        <end position="319"/>
    </location>
</feature>
<feature type="region of interest" description="Disordered" evidence="4">
    <location>
        <begin position="585"/>
        <end position="608"/>
    </location>
</feature>
<feature type="glycosylation site" description="N-linked (GlcNAc...) asparagine" evidence="2">
    <location>
        <position position="33"/>
    </location>
</feature>
<feature type="glycosylation site" description="N-linked (GlcNAc...) asparagine" evidence="2">
    <location>
        <position position="109"/>
    </location>
</feature>
<feature type="glycosylation site" description="N-linked (GlcNAc...) asparagine" evidence="2">
    <location>
        <position position="153"/>
    </location>
</feature>
<feature type="glycosylation site" description="N-linked (GlcNAc...) asparagine" evidence="2">
    <location>
        <position position="402"/>
    </location>
</feature>
<feature type="glycosylation site" description="N-linked (GlcNAc...) asparagine" evidence="2">
    <location>
        <position position="488"/>
    </location>
</feature>
<feature type="disulfide bond" evidence="3">
    <location>
        <begin position="77"/>
        <end position="86"/>
    </location>
</feature>
<feature type="disulfide bond" evidence="3">
    <location>
        <begin position="99"/>
        <end position="114"/>
    </location>
</feature>
<feature type="disulfide bond" evidence="3">
    <location>
        <begin position="113"/>
        <end position="124"/>
    </location>
</feature>
<feature type="disulfide bond" evidence="3">
    <location>
        <begin position="148"/>
        <end position="193"/>
    </location>
</feature>
<feature type="disulfide bond" evidence="3">
    <location>
        <begin position="224"/>
        <end position="270"/>
    </location>
</feature>
<feature type="disulfide bond" evidence="3">
    <location>
        <begin position="269"/>
        <end position="277"/>
    </location>
</feature>
<feature type="disulfide bond" evidence="3">
    <location>
        <begin position="289"/>
        <end position="303"/>
    </location>
</feature>
<feature type="disulfide bond" evidence="3">
    <location>
        <begin position="302"/>
        <end position="313"/>
    </location>
</feature>
<feature type="disulfide bond" evidence="3">
    <location>
        <begin position="340"/>
        <end position="385"/>
    </location>
</feature>
<feature type="disulfide bond" evidence="3">
    <location>
        <begin position="384"/>
        <end position="393"/>
    </location>
</feature>
<feature type="disulfide bond" evidence="3">
    <location>
        <begin position="416"/>
        <end position="462"/>
    </location>
</feature>
<feature type="disulfide bond" evidence="3">
    <location>
        <begin position="461"/>
        <end position="470"/>
    </location>
</feature>
<feature type="disulfide bond" evidence="3">
    <location>
        <begin position="483"/>
        <end position="499"/>
    </location>
</feature>
<feature type="disulfide bond" evidence="3">
    <location>
        <begin position="498"/>
        <end position="509"/>
    </location>
</feature>
<feature type="disulfide bond" evidence="3">
    <location>
        <begin position="580"/>
        <end position="589"/>
    </location>
</feature>
<accession>P36953</accession>
<sequence length="608" mass="69335">MRHLKLTGFIFFLLSLTESLALPTKPQDVDHFNATQKFINENVAYLTIIASAQYVQEASFEEVEMLVKVMLDYKDRCLADSTLPECSKIANDAIQDMLCDMKGLPQKHNFSHCCRQAGFQRRLCFFYNKKANVGFLPPFPTLDPEEKCQAYKNNSESFLNLYMYEVARRNPFAFAPVLLNVAARFEEAATTCCEQQQKATYFQDKAAPITQYLKALSSYQRNVCGALLKFGPKTLNSINIAVFSKKFPKIGFEDLTSLLEDVSSMYDGCCEGDVVQCIRSQSQVMHHICSKQDSISSKIKACCEKKLPERADCIINANKDDRPEDLSLRTPKFTDSENVCQERDSEQDKFFAEFLYDYSRRHTELSTPELLRITKVYKDLLEDCCNRKNPLSCYRHAEDKFNETTERSLAMVQQECKQFQELGKDALQRHFLVKFTKAAPQLPMEELVSLSKEMVAALATCCTLSDEFACVDNLADLVLGELCGMNKNRTINPTVDHCCRADFAFRRPCFEHLKADTTYALPSVSALVSALRADWCQPLKEDLQNKRHRFLVNLVKWMPEITDEERLCLFTKFTAAGEECGNIQKPEACFSPESSKTGDVSQDAEKQR</sequence>
<dbReference type="EMBL" id="X76456">
    <property type="protein sequence ID" value="CAA53994.1"/>
    <property type="molecule type" value="Genomic_DNA"/>
</dbReference>
<dbReference type="PIR" id="A53195">
    <property type="entry name" value="A53195"/>
</dbReference>
<dbReference type="RefSeq" id="NP_758823.1">
    <property type="nucleotide sequence ID" value="NM_172320.1"/>
</dbReference>
<dbReference type="SMR" id="P36953"/>
<dbReference type="FunCoup" id="P36953">
    <property type="interactions" value="43"/>
</dbReference>
<dbReference type="STRING" id="10116.ENSRNOP00000057275"/>
<dbReference type="GlyCosmos" id="P36953">
    <property type="glycosylation" value="5 sites, No reported glycans"/>
</dbReference>
<dbReference type="GlyGen" id="P36953">
    <property type="glycosylation" value="5 sites"/>
</dbReference>
<dbReference type="iPTMnet" id="P36953"/>
<dbReference type="PhosphoSitePlus" id="P36953"/>
<dbReference type="PaxDb" id="10116-ENSRNOP00000057275"/>
<dbReference type="GeneID" id="282708"/>
<dbReference type="KEGG" id="rno:282708"/>
<dbReference type="UCSC" id="RGD:628614">
    <property type="organism name" value="rat"/>
</dbReference>
<dbReference type="AGR" id="RGD:628614"/>
<dbReference type="CTD" id="173"/>
<dbReference type="RGD" id="628614">
    <property type="gene designation" value="Afm"/>
</dbReference>
<dbReference type="eggNOG" id="ENOG502R7EA">
    <property type="taxonomic scope" value="Eukaryota"/>
</dbReference>
<dbReference type="InParanoid" id="P36953"/>
<dbReference type="PhylomeDB" id="P36953"/>
<dbReference type="PRO" id="PR:P36953"/>
<dbReference type="Proteomes" id="UP000002494">
    <property type="component" value="Unplaced"/>
</dbReference>
<dbReference type="GO" id="GO:0005737">
    <property type="term" value="C:cytoplasm"/>
    <property type="evidence" value="ECO:0000318"/>
    <property type="project" value="GO_Central"/>
</dbReference>
<dbReference type="GO" id="GO:0005615">
    <property type="term" value="C:extracellular space"/>
    <property type="evidence" value="ECO:0000314"/>
    <property type="project" value="RGD"/>
</dbReference>
<dbReference type="GO" id="GO:0008431">
    <property type="term" value="F:vitamin E binding"/>
    <property type="evidence" value="ECO:0000250"/>
    <property type="project" value="UniProtKB"/>
</dbReference>
<dbReference type="GO" id="GO:0050821">
    <property type="term" value="P:protein stabilization"/>
    <property type="evidence" value="ECO:0000250"/>
    <property type="project" value="UniProtKB"/>
</dbReference>
<dbReference type="GO" id="GO:0071693">
    <property type="term" value="P:protein transport within extracellular region"/>
    <property type="evidence" value="ECO:0000250"/>
    <property type="project" value="UniProtKB"/>
</dbReference>
<dbReference type="GO" id="GO:0051180">
    <property type="term" value="P:vitamin transport"/>
    <property type="evidence" value="ECO:0000250"/>
    <property type="project" value="UniProtKB"/>
</dbReference>
<dbReference type="CDD" id="cd00015">
    <property type="entry name" value="ALBUMIN"/>
    <property type="match status" value="3"/>
</dbReference>
<dbReference type="FunFam" id="1.10.246.10:FF:000001">
    <property type="entry name" value="Serum albumin"/>
    <property type="match status" value="3"/>
</dbReference>
<dbReference type="FunFam" id="1.10.246.10:FF:000002">
    <property type="entry name" value="Serum albumin"/>
    <property type="match status" value="1"/>
</dbReference>
<dbReference type="FunFam" id="1.10.246.10:FF:000004">
    <property type="entry name" value="Serum albumin"/>
    <property type="match status" value="1"/>
</dbReference>
<dbReference type="Gene3D" id="1.10.246.10">
    <property type="match status" value="6"/>
</dbReference>
<dbReference type="InterPro" id="IPR000264">
    <property type="entry name" value="ALB/AFP/VDB"/>
</dbReference>
<dbReference type="InterPro" id="IPR020858">
    <property type="entry name" value="Serum_albumin-like"/>
</dbReference>
<dbReference type="InterPro" id="IPR021177">
    <property type="entry name" value="Serum_albumin/AFP/Afamin"/>
</dbReference>
<dbReference type="InterPro" id="IPR020857">
    <property type="entry name" value="Serum_albumin_CS"/>
</dbReference>
<dbReference type="InterPro" id="IPR014760">
    <property type="entry name" value="Serum_albumin_N"/>
</dbReference>
<dbReference type="PANTHER" id="PTHR11385:SF14">
    <property type="entry name" value="AFAMIN"/>
    <property type="match status" value="1"/>
</dbReference>
<dbReference type="PANTHER" id="PTHR11385">
    <property type="entry name" value="SERUM ALBUMIN-RELATED"/>
    <property type="match status" value="1"/>
</dbReference>
<dbReference type="Pfam" id="PF00273">
    <property type="entry name" value="Serum_albumin"/>
    <property type="match status" value="3"/>
</dbReference>
<dbReference type="PIRSF" id="PIRSF002520">
    <property type="entry name" value="Serum_albumin_subgroup"/>
    <property type="match status" value="1"/>
</dbReference>
<dbReference type="PRINTS" id="PR00802">
    <property type="entry name" value="SERUMALBUMIN"/>
</dbReference>
<dbReference type="SMART" id="SM00103">
    <property type="entry name" value="ALBUMIN"/>
    <property type="match status" value="3"/>
</dbReference>
<dbReference type="SUPFAM" id="SSF48552">
    <property type="entry name" value="Serum albumin-like"/>
    <property type="match status" value="3"/>
</dbReference>
<dbReference type="PROSITE" id="PS00212">
    <property type="entry name" value="ALBUMIN_1"/>
    <property type="match status" value="1"/>
</dbReference>
<dbReference type="PROSITE" id="PS51438">
    <property type="entry name" value="ALBUMIN_2"/>
    <property type="match status" value="3"/>
</dbReference>
<gene>
    <name type="primary">Afm</name>
</gene>
<keyword id="KW-1015">Disulfide bond</keyword>
<keyword id="KW-0325">Glycoprotein</keyword>
<keyword id="KW-0653">Protein transport</keyword>
<keyword id="KW-1185">Reference proteome</keyword>
<keyword id="KW-0677">Repeat</keyword>
<keyword id="KW-0964">Secreted</keyword>
<keyword id="KW-0732">Signal</keyword>
<keyword id="KW-0813">Transport</keyword>
<reference key="1">
    <citation type="journal article" date="1994" name="J. Biol. Chem.">
        <title>New albumin gene 3' adjacent to the alpha 1-fetoprotein locus.</title>
        <authorList>
            <person name="Belanger L."/>
            <person name="Roy S."/>
            <person name="Allard D."/>
        </authorList>
    </citation>
    <scope>NUCLEOTIDE SEQUENCE [GENOMIC DNA]</scope>
    <source>
        <strain>Sprague-Dawley</strain>
    </source>
</reference>
<protein>
    <recommendedName>
        <fullName>Afamin</fullName>
    </recommendedName>
    <alternativeName>
        <fullName>Alpha-albumin</fullName>
        <shortName>Alpha-Alb</shortName>
    </alternativeName>
</protein>
<comment type="function">
    <text evidence="1">Functions as a carrier for hydrophobic molecules in body fluids. Essential for the solubility and activity of lipidated Wnt family members, including WNT1, WNT2B, WNT3, WNT3A, WNT5A, WNT7A, WNT7B, WNT8, WNT9A, WNT9B, WNT10A and WNT10B. Binds vitamin E. May transport vitamin E in body fluids under conditions where the lipoprotein system is not sufficient. May be involved in the transport of vitamin E across the blood-brain barrier.</text>
</comment>
<comment type="subunit">
    <text evidence="1">Forms a 1:1 complex with Wnt family members; interacts with WNT1, WNT2B, WNT3, WNT3A, WNT5A, WNT7A, WNT7B, WNT8, WNT9A, WNT9B, WNT10A and WNT10B.</text>
</comment>
<comment type="subcellular location">
    <subcellularLocation>
        <location evidence="1">Secreted</location>
    </subcellularLocation>
</comment>
<comment type="domain">
    <text evidence="1">The second albumin domain forms a deep binding pocket that contains palmitoleic acid (in vitro). Palmitoleic acid is most likely not the physiological ligand. Instead, this pocket may accomodate the covalently bound lipid moiety of Wnt family members.</text>
</comment>
<comment type="PTM">
    <text evidence="1">N-glycosylated; more than 90% of the glycans are sialylated.</text>
</comment>
<comment type="similarity">
    <text evidence="3">Belongs to the ALB/AFP/VDB family.</text>
</comment>
<evidence type="ECO:0000250" key="1">
    <source>
        <dbReference type="UniProtKB" id="P43652"/>
    </source>
</evidence>
<evidence type="ECO:0000255" key="2"/>
<evidence type="ECO:0000255" key="3">
    <source>
        <dbReference type="PROSITE-ProRule" id="PRU00769"/>
    </source>
</evidence>
<evidence type="ECO:0000256" key="4">
    <source>
        <dbReference type="SAM" id="MobiDB-lite"/>
    </source>
</evidence>